<dbReference type="EMBL" id="BC035937">
    <property type="protein sequence ID" value="AAH35937.1"/>
    <property type="molecule type" value="mRNA"/>
</dbReference>
<dbReference type="EMBL" id="AL831961">
    <property type="protein sequence ID" value="CAD38603.1"/>
    <property type="molecule type" value="mRNA"/>
</dbReference>
<dbReference type="CCDS" id="CCDS7700.1"/>
<dbReference type="RefSeq" id="NP_932341.1">
    <property type="nucleotide sequence ID" value="NM_198075.4"/>
</dbReference>
<dbReference type="RefSeq" id="XP_005252832.1">
    <property type="nucleotide sequence ID" value="XM_005252775.3"/>
</dbReference>
<dbReference type="RefSeq" id="XP_006718195.1">
    <property type="nucleotide sequence ID" value="XM_006718132.3"/>
</dbReference>
<dbReference type="RefSeq" id="XP_006718196.1">
    <property type="nucleotide sequence ID" value="XM_006718133.3"/>
</dbReference>
<dbReference type="RefSeq" id="XP_011518177.1">
    <property type="nucleotide sequence ID" value="XM_011519875.3"/>
</dbReference>
<dbReference type="RefSeq" id="XP_011518178.1">
    <property type="nucleotide sequence ID" value="XM_011519876.2"/>
</dbReference>
<dbReference type="RefSeq" id="XP_011518179.1">
    <property type="nucleotide sequence ID" value="XM_011519877.3"/>
</dbReference>
<dbReference type="RefSeq" id="XP_016872656.1">
    <property type="nucleotide sequence ID" value="XM_017017167.2"/>
</dbReference>
<dbReference type="RefSeq" id="XP_016872657.1">
    <property type="nucleotide sequence ID" value="XM_017017168.2"/>
</dbReference>
<dbReference type="RefSeq" id="XP_047282292.1">
    <property type="nucleotide sequence ID" value="XM_047426336.1"/>
</dbReference>
<dbReference type="SMR" id="Q8IYG6"/>
<dbReference type="BioGRID" id="125432">
    <property type="interactions" value="13"/>
</dbReference>
<dbReference type="FunCoup" id="Q8IYG6">
    <property type="interactions" value="29"/>
</dbReference>
<dbReference type="IntAct" id="Q8IYG6">
    <property type="interactions" value="16"/>
</dbReference>
<dbReference type="STRING" id="9606.ENSP00000270115"/>
<dbReference type="GlyGen" id="Q8IYG6">
    <property type="glycosylation" value="1 site, 1 O-linked glycan (1 site)"/>
</dbReference>
<dbReference type="iPTMnet" id="Q8IYG6"/>
<dbReference type="PhosphoSitePlus" id="Q8IYG6"/>
<dbReference type="BioMuta" id="LRRC56"/>
<dbReference type="DMDM" id="74759709"/>
<dbReference type="jPOST" id="Q8IYG6"/>
<dbReference type="MassIVE" id="Q8IYG6"/>
<dbReference type="PaxDb" id="9606-ENSP00000270115"/>
<dbReference type="PeptideAtlas" id="Q8IYG6"/>
<dbReference type="ProteomicsDB" id="71171"/>
<dbReference type="Antibodypedia" id="22521">
    <property type="antibodies" value="31 antibodies from 14 providers"/>
</dbReference>
<dbReference type="DNASU" id="115399"/>
<dbReference type="Ensembl" id="ENST00000270115.8">
    <property type="protein sequence ID" value="ENSP00000270115.7"/>
    <property type="gene ID" value="ENSG00000161328.11"/>
</dbReference>
<dbReference type="GeneID" id="115399"/>
<dbReference type="KEGG" id="hsa:115399"/>
<dbReference type="MANE-Select" id="ENST00000270115.8">
    <property type="protein sequence ID" value="ENSP00000270115.7"/>
    <property type="RefSeq nucleotide sequence ID" value="NM_198075.4"/>
    <property type="RefSeq protein sequence ID" value="NP_932341.1"/>
</dbReference>
<dbReference type="UCSC" id="uc010qvz.3">
    <property type="organism name" value="human"/>
</dbReference>
<dbReference type="AGR" id="HGNC:25430"/>
<dbReference type="CTD" id="115399"/>
<dbReference type="DisGeNET" id="115399"/>
<dbReference type="GeneCards" id="LRRC56"/>
<dbReference type="HGNC" id="HGNC:25430">
    <property type="gene designation" value="LRRC56"/>
</dbReference>
<dbReference type="HPA" id="ENSG00000161328">
    <property type="expression patterns" value="Tissue enhanced (pituitary gland, testis)"/>
</dbReference>
<dbReference type="MalaCards" id="LRRC56"/>
<dbReference type="MIM" id="618227">
    <property type="type" value="gene"/>
</dbReference>
<dbReference type="MIM" id="618254">
    <property type="type" value="phenotype"/>
</dbReference>
<dbReference type="neXtProt" id="NX_Q8IYG6"/>
<dbReference type="OpenTargets" id="ENSG00000161328"/>
<dbReference type="Orphanet" id="244">
    <property type="disease" value="Primary ciliary dyskinesia"/>
</dbReference>
<dbReference type="PharmGKB" id="PA142671515"/>
<dbReference type="VEuPathDB" id="HostDB:ENSG00000161328"/>
<dbReference type="eggNOG" id="KOG0531">
    <property type="taxonomic scope" value="Eukaryota"/>
</dbReference>
<dbReference type="GeneTree" id="ENSGT00390000001545"/>
<dbReference type="HOGENOM" id="CLU_031382_2_0_1"/>
<dbReference type="InParanoid" id="Q8IYG6"/>
<dbReference type="OMA" id="NMLEMCV"/>
<dbReference type="OrthoDB" id="676979at2759"/>
<dbReference type="PAN-GO" id="Q8IYG6">
    <property type="GO annotations" value="0 GO annotations based on evolutionary models"/>
</dbReference>
<dbReference type="PhylomeDB" id="Q8IYG6"/>
<dbReference type="TreeFam" id="TF326690"/>
<dbReference type="PathwayCommons" id="Q8IYG6"/>
<dbReference type="SignaLink" id="Q8IYG6"/>
<dbReference type="BioGRID-ORCS" id="115399">
    <property type="hits" value="9 hits in 1152 CRISPR screens"/>
</dbReference>
<dbReference type="GenomeRNAi" id="115399"/>
<dbReference type="Pharos" id="Q8IYG6">
    <property type="development level" value="Tdark"/>
</dbReference>
<dbReference type="PRO" id="PR:Q8IYG6"/>
<dbReference type="Proteomes" id="UP000005640">
    <property type="component" value="Chromosome 11"/>
</dbReference>
<dbReference type="RNAct" id="Q8IYG6">
    <property type="molecule type" value="protein"/>
</dbReference>
<dbReference type="Bgee" id="ENSG00000161328">
    <property type="expression patterns" value="Expressed in right uterine tube and 92 other cell types or tissues"/>
</dbReference>
<dbReference type="GO" id="GO:0005929">
    <property type="term" value="C:cilium"/>
    <property type="evidence" value="ECO:0007669"/>
    <property type="project" value="UniProtKB-SubCell"/>
</dbReference>
<dbReference type="GO" id="GO:0030030">
    <property type="term" value="P:cell projection organization"/>
    <property type="evidence" value="ECO:0007669"/>
    <property type="project" value="UniProtKB-KW"/>
</dbReference>
<dbReference type="Gene3D" id="3.80.10.10">
    <property type="entry name" value="Ribonuclease Inhibitor"/>
    <property type="match status" value="1"/>
</dbReference>
<dbReference type="InterPro" id="IPR001611">
    <property type="entry name" value="Leu-rich_rpt"/>
</dbReference>
<dbReference type="InterPro" id="IPR025875">
    <property type="entry name" value="Leu-rich_rpt_4"/>
</dbReference>
<dbReference type="InterPro" id="IPR032675">
    <property type="entry name" value="LRR_dom_sf"/>
</dbReference>
<dbReference type="InterPro" id="IPR040091">
    <property type="entry name" value="LRRC56"/>
</dbReference>
<dbReference type="PANTHER" id="PTHR22708">
    <property type="entry name" value="LEUCINE-RICH REPEAT-CONTAINING PROTEIN 56"/>
    <property type="match status" value="1"/>
</dbReference>
<dbReference type="PANTHER" id="PTHR22708:SF0">
    <property type="entry name" value="LEUCINE-RICH REPEAT-CONTAINING PROTEIN 56"/>
    <property type="match status" value="1"/>
</dbReference>
<dbReference type="Pfam" id="PF12799">
    <property type="entry name" value="LRR_4"/>
    <property type="match status" value="1"/>
</dbReference>
<dbReference type="SUPFAM" id="SSF52058">
    <property type="entry name" value="L domain-like"/>
    <property type="match status" value="1"/>
</dbReference>
<dbReference type="PROSITE" id="PS51450">
    <property type="entry name" value="LRR"/>
    <property type="match status" value="4"/>
</dbReference>
<feature type="chain" id="PRO_0000229923" description="Leucine-rich repeat-containing protein 56">
    <location>
        <begin position="1"/>
        <end position="542"/>
    </location>
</feature>
<feature type="repeat" description="LRR 1">
    <location>
        <begin position="94"/>
        <end position="115"/>
    </location>
</feature>
<feature type="repeat" description="LRR 2">
    <location>
        <begin position="117"/>
        <end position="138"/>
    </location>
</feature>
<feature type="repeat" description="LRR 3">
    <location>
        <begin position="139"/>
        <end position="160"/>
    </location>
</feature>
<feature type="repeat" description="LRR 4">
    <location>
        <begin position="161"/>
        <end position="182"/>
    </location>
</feature>
<feature type="repeat" description="LRR 5">
    <location>
        <begin position="186"/>
        <end position="206"/>
    </location>
</feature>
<feature type="domain" description="LRRCT">
    <location>
        <begin position="207"/>
        <end position="250"/>
    </location>
</feature>
<feature type="region of interest" description="Disordered" evidence="2">
    <location>
        <begin position="308"/>
        <end position="377"/>
    </location>
</feature>
<feature type="region of interest" description="Disordered" evidence="2">
    <location>
        <begin position="396"/>
        <end position="475"/>
    </location>
</feature>
<feature type="region of interest" description="Disordered" evidence="2">
    <location>
        <begin position="507"/>
        <end position="542"/>
    </location>
</feature>
<feature type="compositionally biased region" description="Basic and acidic residues" evidence="2">
    <location>
        <begin position="416"/>
        <end position="426"/>
    </location>
</feature>
<feature type="compositionally biased region" description="Low complexity" evidence="2">
    <location>
        <begin position="522"/>
        <end position="532"/>
    </location>
</feature>
<feature type="sequence variant" id="VAR_034090" description="In dbSNP:rs2277269.">
    <original>R</original>
    <variation>Q</variation>
    <location>
        <position position="12"/>
    </location>
</feature>
<feature type="sequence variant" id="VAR_081775" description="In CILD39; dbSNP:rs1564805039." evidence="4">
    <original>L</original>
    <variation>P</variation>
    <location>
        <position position="140"/>
    </location>
</feature>
<feature type="sequence variant" id="VAR_081776" description="In CILD39." evidence="4">
    <location>
        <begin position="254"/>
        <end position="542"/>
    </location>
</feature>
<feature type="sequence variant" id="VAR_059694" description="In dbSNP:rs4963198.">
    <original>R</original>
    <variation>H</variation>
    <location>
        <position position="300"/>
    </location>
</feature>
<feature type="sequence variant" id="VAR_061678" description="In dbSNP:rs12793222.">
    <original>R</original>
    <variation>Q</variation>
    <location>
        <position position="467"/>
    </location>
</feature>
<feature type="sequence variant" id="VAR_025782" description="In dbSNP:rs10902170." evidence="3">
    <original>R</original>
    <variation>G</variation>
    <location>
        <position position="507"/>
    </location>
</feature>
<feature type="sequence variant" id="VAR_025783" description="In dbSNP:rs10902171." evidence="3">
    <original>D</original>
    <variation>H</variation>
    <location>
        <position position="523"/>
    </location>
</feature>
<organism>
    <name type="scientific">Homo sapiens</name>
    <name type="common">Human</name>
    <dbReference type="NCBI Taxonomy" id="9606"/>
    <lineage>
        <taxon>Eukaryota</taxon>
        <taxon>Metazoa</taxon>
        <taxon>Chordata</taxon>
        <taxon>Craniata</taxon>
        <taxon>Vertebrata</taxon>
        <taxon>Euteleostomi</taxon>
        <taxon>Mammalia</taxon>
        <taxon>Eutheria</taxon>
        <taxon>Euarchontoglires</taxon>
        <taxon>Primates</taxon>
        <taxon>Haplorrhini</taxon>
        <taxon>Catarrhini</taxon>
        <taxon>Hominidae</taxon>
        <taxon>Homo</taxon>
    </lineage>
</organism>
<reference key="1">
    <citation type="journal article" date="2004" name="Genome Res.">
        <title>The status, quality, and expansion of the NIH full-length cDNA project: the Mammalian Gene Collection (MGC).</title>
        <authorList>
            <consortium name="The MGC Project Team"/>
        </authorList>
    </citation>
    <scope>NUCLEOTIDE SEQUENCE [LARGE SCALE MRNA]</scope>
    <source>
        <tissue>Brain</tissue>
    </source>
</reference>
<reference key="2">
    <citation type="journal article" date="2007" name="BMC Genomics">
        <title>The full-ORF clone resource of the German cDNA consortium.</title>
        <authorList>
            <person name="Bechtel S."/>
            <person name="Rosenfelder H."/>
            <person name="Duda A."/>
            <person name="Schmidt C.P."/>
            <person name="Ernst U."/>
            <person name="Wellenreuther R."/>
            <person name="Mehrle A."/>
            <person name="Schuster C."/>
            <person name="Bahr A."/>
            <person name="Bloecker H."/>
            <person name="Heubner D."/>
            <person name="Hoerlein A."/>
            <person name="Michel G."/>
            <person name="Wedler H."/>
            <person name="Koehrer K."/>
            <person name="Ottenwaelder B."/>
            <person name="Poustka A."/>
            <person name="Wiemann S."/>
            <person name="Schupp I."/>
        </authorList>
    </citation>
    <scope>NUCLEOTIDE SEQUENCE [LARGE SCALE MRNA] OF 378-542</scope>
    <scope>VARIANTS GLY-507 AND HIS-523</scope>
    <source>
        <tissue>Amygdala</tissue>
    </source>
</reference>
<reference key="3">
    <citation type="journal article" date="2018" name="Am. J. Hum. Genet.">
        <title>Biallelic mutations in LRRC56, encoding a protein associated with intraflagellar transport, cause mucociliary clearance and laterality defects.</title>
        <authorList>
            <consortium name="Care4Rare Canada Consortium"/>
            <person name="Bonnefoy S."/>
            <person name="Watson C.M."/>
            <person name="Kernohan K.D."/>
            <person name="Lemos M."/>
            <person name="Hutchinson S."/>
            <person name="Poulter J.A."/>
            <person name="Crinnion L.A."/>
            <person name="Berry I."/>
            <person name="Simmonds J."/>
            <person name="Vasudevan P."/>
            <person name="O'Callaghan C."/>
            <person name="Hirst R.A."/>
            <person name="Rutman A."/>
            <person name="Huang L."/>
            <person name="Hartley T."/>
            <person name="Grynspan D."/>
            <person name="Moya E."/>
            <person name="Li C."/>
            <person name="Carr I.M."/>
            <person name="Bonthron D.T."/>
            <person name="Leroux M."/>
            <person name="Boycott K.M."/>
            <person name="Bastin P."/>
            <person name="Sheridan E.G."/>
        </authorList>
    </citation>
    <scope>INVOLVEMENT IN CILD39</scope>
    <scope>INTERACTION WITH IFT88</scope>
    <scope>VARIANTS CILD39 PRO-140 AND 254-GLU--THR-542 DEL</scope>
</reference>
<proteinExistence type="evidence at protein level"/>
<comment type="function">
    <text evidence="1">Required for the assembly of dynein arms.</text>
</comment>
<comment type="subunit">
    <text evidence="4">Interacts with IFT88.</text>
</comment>
<comment type="interaction">
    <interactant intactId="EBI-14752528">
        <id>Q8IYG6</id>
    </interactant>
    <interactant intactId="EBI-718729">
        <id>P55212</id>
        <label>CASP6</label>
    </interactant>
    <organismsDiffer>false</organismsDiffer>
    <experiments>3</experiments>
</comment>
<comment type="interaction">
    <interactant intactId="EBI-14752528">
        <id>Q8IYG6</id>
    </interactant>
    <interactant intactId="EBI-446479">
        <id>P99999</id>
        <label>CYCS</label>
    </interactant>
    <organismsDiffer>false</organismsDiffer>
    <experiments>3</experiments>
</comment>
<comment type="interaction">
    <interactant intactId="EBI-14752528">
        <id>Q8IYG6</id>
    </interactant>
    <interactant intactId="EBI-473886">
        <id>O00291</id>
        <label>HIP1</label>
    </interactant>
    <organismsDiffer>false</organismsDiffer>
    <experiments>3</experiments>
</comment>
<comment type="interaction">
    <interactant intactId="EBI-14752528">
        <id>Q8IYG6</id>
    </interactant>
    <interactant intactId="EBI-712096">
        <id>P30519</id>
        <label>HMOX2</label>
    </interactant>
    <organismsDiffer>false</organismsDiffer>
    <experiments>3</experiments>
</comment>
<comment type="interaction">
    <interactant intactId="EBI-14752528">
        <id>Q8IYG6</id>
    </interactant>
    <interactant intactId="EBI-7116203">
        <id>O75031</id>
        <label>HSF2BP</label>
    </interactant>
    <organismsDiffer>false</organismsDiffer>
    <experiments>3</experiments>
</comment>
<comment type="interaction">
    <interactant intactId="EBI-14752528">
        <id>Q8IYG6</id>
    </interactant>
    <interactant intactId="EBI-21591415">
        <id>P13473-2</id>
        <label>LAMP2</label>
    </interactant>
    <organismsDiffer>false</organismsDiffer>
    <experiments>3</experiments>
</comment>
<comment type="interaction">
    <interactant intactId="EBI-14752528">
        <id>Q8IYG6</id>
    </interactant>
    <interactant intactId="EBI-286642">
        <id>P62826</id>
        <label>RAN</label>
    </interactant>
    <organismsDiffer>false</organismsDiffer>
    <experiments>3</experiments>
</comment>
<comment type="subcellular location">
    <subcellularLocation>
        <location evidence="1">Cell projection</location>
        <location evidence="1">Cilium</location>
    </subcellularLocation>
</comment>
<comment type="disease" evidence="4">
    <disease id="DI-05437">
        <name>Ciliary dyskinesia, primary, 39</name>
        <acronym>CILD39</acronym>
        <description>A form of primary ciliary dyskinesia, a disorder characterized by abnormalities of motile cilia. Respiratory infections leading to chronic inflammation and bronchiectasis are recurrent, due to defects in the respiratory cilia. Some patients exhibit randomization of left-right body asymmetry and situs inversus. Primary ciliary dyskinesia associated with situs inversus is referred to as Kartagener syndrome. CILD39 inheritance is autosomal recessive.</description>
        <dbReference type="MIM" id="618254"/>
    </disease>
    <text>The disease is caused by variants affecting the gene represented in this entry.</text>
</comment>
<comment type="similarity">
    <text evidence="5">Belongs to the LRRC56 family.</text>
</comment>
<accession>Q8IYG6</accession>
<accession>Q8N3Q4</accession>
<protein>
    <recommendedName>
        <fullName>Leucine-rich repeat-containing protein 56</fullName>
    </recommendedName>
</protein>
<evidence type="ECO:0000250" key="1">
    <source>
        <dbReference type="UniProtKB" id="Q387Y5"/>
    </source>
</evidence>
<evidence type="ECO:0000256" key="2">
    <source>
        <dbReference type="SAM" id="MobiDB-lite"/>
    </source>
</evidence>
<evidence type="ECO:0000269" key="3">
    <source>
    </source>
</evidence>
<evidence type="ECO:0000269" key="4">
    <source>
    </source>
</evidence>
<evidence type="ECO:0000305" key="5"/>
<sequence>MDLGWDRSRGPRRSTSSVRVRELSWQGLHNPCPQSKGPGSQRDRLGEQLVEEYLSPARLQALARVDDLRLVRTLEMCVDTREGSLGNFGVHLPNLDQLKLNGSHLGSLRDLGTSLGHLQVLWLARCGLADLDGIASLPALKELYASYNNISDLSPLCLLEQLEVLDLEGNSVEDLGQVRYLQLCPRLAMLTLEGNLVCLQPAPGPTNKVPRGYNYRAEVRKLIPQLQVLDEVPAAHTGPPAPPRLSQDWLAVKEAIKKGNGLPPLDCPRGAPIRRLDPELSLPETQSRASRPWPFSLLVRGGPLPEGLLSEDLAPEDNTSSLTHGAGQVLCGNPTKGLRERRHQCQAREPPEQLPQHRPGDPAASTSTPEPDPADSSDFLALAGLRAWREHGVRPLPYRHPESQQEGAVAPWGPRRVPEEQVHQAEPKTPSSPPSLASEPSGTSSQHLVPSPPKHPRPRDSGSSSPRWSTDLQSRGRRLRVLGSWGPGLGDGVAAVPVLRALEVASRLSPRAQGCPGPKPAPDAAARPPRAAELSHPSPVPT</sequence>
<name>LRC56_HUMAN</name>
<keyword id="KW-0966">Cell projection</keyword>
<keyword id="KW-1186">Ciliopathy</keyword>
<keyword id="KW-0970">Cilium biogenesis/degradation</keyword>
<keyword id="KW-0225">Disease variant</keyword>
<keyword id="KW-1012">Kartagener syndrome</keyword>
<keyword id="KW-0433">Leucine-rich repeat</keyword>
<keyword id="KW-0990">Primary ciliary dyskinesia</keyword>
<keyword id="KW-1267">Proteomics identification</keyword>
<keyword id="KW-1185">Reference proteome</keyword>
<keyword id="KW-0677">Repeat</keyword>
<gene>
    <name type="primary">LRRC56</name>
</gene>